<keyword id="KW-1003">Cell membrane</keyword>
<keyword id="KW-1015">Disulfide bond</keyword>
<keyword id="KW-0297">G-protein coupled receptor</keyword>
<keyword id="KW-0325">Glycoprotein</keyword>
<keyword id="KW-0449">Lipoprotein</keyword>
<keyword id="KW-0472">Membrane</keyword>
<keyword id="KW-0564">Palmitate</keyword>
<keyword id="KW-0675">Receptor</keyword>
<keyword id="KW-1185">Reference proteome</keyword>
<keyword id="KW-0807">Transducer</keyword>
<keyword id="KW-0812">Transmembrane</keyword>
<keyword id="KW-1133">Transmembrane helix</keyword>
<proteinExistence type="evidence at transcript level"/>
<organism>
    <name type="scientific">Cavia porcellus</name>
    <name type="common">Guinea pig</name>
    <dbReference type="NCBI Taxonomy" id="10141"/>
    <lineage>
        <taxon>Eukaryota</taxon>
        <taxon>Metazoa</taxon>
        <taxon>Chordata</taxon>
        <taxon>Craniata</taxon>
        <taxon>Vertebrata</taxon>
        <taxon>Euteleostomi</taxon>
        <taxon>Mammalia</taxon>
        <taxon>Eutheria</taxon>
        <taxon>Euarchontoglires</taxon>
        <taxon>Glires</taxon>
        <taxon>Rodentia</taxon>
        <taxon>Hystricomorpha</taxon>
        <taxon>Caviidae</taxon>
        <taxon>Cavia</taxon>
    </lineage>
</organism>
<name>CCKAR_CAVPO</name>
<comment type="function">
    <text evidence="1">Receptor for cholecystokinin. Mediates pancreatic growth and enzyme secretion, smooth muscle contraction of the gall bladder and stomach. Has a 1000-fold higher affinity for CCK rather than for gastrin. It modulates feeding and dopamine-induced behavior in the central and peripheral nervous system. This receptor mediates its action by association with G proteins that activate a phosphatidylinositol-calcium second messenger system (By similarity).</text>
</comment>
<comment type="subcellular location">
    <subcellularLocation>
        <location>Cell membrane</location>
        <topology>Multi-pass membrane protein</topology>
    </subcellularLocation>
</comment>
<comment type="similarity">
    <text evidence="3">Belongs to the G-protein coupled receptor 1 family.</text>
</comment>
<gene>
    <name type="primary">CCKAR</name>
</gene>
<dbReference type="EMBL" id="S68242">
    <property type="protein sequence ID" value="AAB29504.1"/>
    <property type="molecule type" value="mRNA"/>
</dbReference>
<dbReference type="PIR" id="I51898">
    <property type="entry name" value="I51898"/>
</dbReference>
<dbReference type="RefSeq" id="XP_003467450.1">
    <property type="nucleotide sequence ID" value="XM_003467402.2"/>
</dbReference>
<dbReference type="SMR" id="Q63931"/>
<dbReference type="FunCoup" id="Q63931">
    <property type="interactions" value="1039"/>
</dbReference>
<dbReference type="STRING" id="10141.ENSCPOP00000006355"/>
<dbReference type="BindingDB" id="Q63931"/>
<dbReference type="ChEMBL" id="CHEMBL3501"/>
<dbReference type="DrugCentral" id="Q63931"/>
<dbReference type="GlyCosmos" id="Q63931">
    <property type="glycosylation" value="4 sites, No reported glycans"/>
</dbReference>
<dbReference type="Ensembl" id="ENSCPOT00000007115.3">
    <property type="protein sequence ID" value="ENSCPOP00000006355.3"/>
    <property type="gene ID" value="ENSCPOG00000007046.4"/>
</dbReference>
<dbReference type="GeneID" id="100719593"/>
<dbReference type="KEGG" id="cpoc:100719593"/>
<dbReference type="CTD" id="886"/>
<dbReference type="VEuPathDB" id="HostDB:ENSCPOG00000007046"/>
<dbReference type="eggNOG" id="KOG3656">
    <property type="taxonomic scope" value="Eukaryota"/>
</dbReference>
<dbReference type="GeneTree" id="ENSGT01130000278338"/>
<dbReference type="HOGENOM" id="CLU_009579_6_3_1"/>
<dbReference type="InParanoid" id="Q63931"/>
<dbReference type="OMA" id="NIAPPCE"/>
<dbReference type="OrthoDB" id="5987936at2759"/>
<dbReference type="PRO" id="PR:Q63931"/>
<dbReference type="Proteomes" id="UP000005447">
    <property type="component" value="Unassembled WGS sequence"/>
</dbReference>
<dbReference type="Bgee" id="ENSCPOG00000007046">
    <property type="expression patterns" value="Expressed in ovary and 2 other cell types or tissues"/>
</dbReference>
<dbReference type="GO" id="GO:0005829">
    <property type="term" value="C:cytosol"/>
    <property type="evidence" value="ECO:0007669"/>
    <property type="project" value="Ensembl"/>
</dbReference>
<dbReference type="GO" id="GO:0005654">
    <property type="term" value="C:nucleoplasm"/>
    <property type="evidence" value="ECO:0007669"/>
    <property type="project" value="Ensembl"/>
</dbReference>
<dbReference type="GO" id="GO:0005886">
    <property type="term" value="C:plasma membrane"/>
    <property type="evidence" value="ECO:0007669"/>
    <property type="project" value="UniProtKB-SubCell"/>
</dbReference>
<dbReference type="GO" id="GO:0004951">
    <property type="term" value="F:cholecystokinin receptor activity"/>
    <property type="evidence" value="ECO:0007669"/>
    <property type="project" value="Ensembl"/>
</dbReference>
<dbReference type="GO" id="GO:0008188">
    <property type="term" value="F:neuropeptide receptor activity"/>
    <property type="evidence" value="ECO:0007669"/>
    <property type="project" value="TreeGrafter"/>
</dbReference>
<dbReference type="GO" id="GO:0017046">
    <property type="term" value="F:peptide hormone binding"/>
    <property type="evidence" value="ECO:0007669"/>
    <property type="project" value="Ensembl"/>
</dbReference>
<dbReference type="GO" id="GO:0007409">
    <property type="term" value="P:axonogenesis"/>
    <property type="evidence" value="ECO:0007669"/>
    <property type="project" value="Ensembl"/>
</dbReference>
<dbReference type="GO" id="GO:0030900">
    <property type="term" value="P:forebrain development"/>
    <property type="evidence" value="ECO:0007669"/>
    <property type="project" value="Ensembl"/>
</dbReference>
<dbReference type="GO" id="GO:0001764">
    <property type="term" value="P:neuron migration"/>
    <property type="evidence" value="ECO:0007669"/>
    <property type="project" value="Ensembl"/>
</dbReference>
<dbReference type="FunFam" id="1.20.1070.10:FF:000168">
    <property type="entry name" value="Cholecystokinin receptor type A"/>
    <property type="match status" value="1"/>
</dbReference>
<dbReference type="FunFam" id="1.20.1070.10:FF:000254">
    <property type="entry name" value="Cholecystokinin receptor type A"/>
    <property type="match status" value="1"/>
</dbReference>
<dbReference type="FunFam" id="4.10.670.10:FF:000001">
    <property type="entry name" value="cholecystokinin receptor type A"/>
    <property type="match status" value="1"/>
</dbReference>
<dbReference type="Gene3D" id="4.10.670.10">
    <property type="entry name" value="Cholecystokinin A receptor, N-terminal domain"/>
    <property type="match status" value="1"/>
</dbReference>
<dbReference type="Gene3D" id="1.20.1070.10">
    <property type="entry name" value="Rhodopsin 7-helix transmembrane proteins"/>
    <property type="match status" value="2"/>
</dbReference>
<dbReference type="InterPro" id="IPR009126">
    <property type="entry name" value="Cholcskin_rcpt"/>
</dbReference>
<dbReference type="InterPro" id="IPR000596">
    <property type="entry name" value="Cholcy_rcpt_A"/>
</dbReference>
<dbReference type="InterPro" id="IPR015276">
    <property type="entry name" value="CholecystokininA_recpt_N"/>
</dbReference>
<dbReference type="InterPro" id="IPR036472">
    <property type="entry name" value="CholecystokininA_recpt_N_sf"/>
</dbReference>
<dbReference type="InterPro" id="IPR000276">
    <property type="entry name" value="GPCR_Rhodpsn"/>
</dbReference>
<dbReference type="InterPro" id="IPR017452">
    <property type="entry name" value="GPCR_Rhodpsn_7TM"/>
</dbReference>
<dbReference type="PANTHER" id="PTHR24238:SF81">
    <property type="entry name" value="CHOLECYSTOKININ RECEPTOR TYPE A"/>
    <property type="match status" value="1"/>
</dbReference>
<dbReference type="PANTHER" id="PTHR24238">
    <property type="entry name" value="G-PROTEIN COUPLED RECEPTOR"/>
    <property type="match status" value="1"/>
</dbReference>
<dbReference type="Pfam" id="PF00001">
    <property type="entry name" value="7tm_1"/>
    <property type="match status" value="1"/>
</dbReference>
<dbReference type="Pfam" id="PF09193">
    <property type="entry name" value="CholecysA-Rec_N"/>
    <property type="match status" value="1"/>
</dbReference>
<dbReference type="PRINTS" id="PR01822">
    <property type="entry name" value="CCYSTOKININR"/>
</dbReference>
<dbReference type="PRINTS" id="PR00524">
    <property type="entry name" value="CCYSTOKNINAR"/>
</dbReference>
<dbReference type="PRINTS" id="PR00237">
    <property type="entry name" value="GPCRRHODOPSN"/>
</dbReference>
<dbReference type="SMART" id="SM01381">
    <property type="entry name" value="7TM_GPCR_Srsx"/>
    <property type="match status" value="1"/>
</dbReference>
<dbReference type="SUPFAM" id="SSF81321">
    <property type="entry name" value="Family A G protein-coupled receptor-like"/>
    <property type="match status" value="1"/>
</dbReference>
<dbReference type="PROSITE" id="PS00237">
    <property type="entry name" value="G_PROTEIN_RECEP_F1_1"/>
    <property type="match status" value="1"/>
</dbReference>
<dbReference type="PROSITE" id="PS50262">
    <property type="entry name" value="G_PROTEIN_RECEP_F1_2"/>
    <property type="match status" value="1"/>
</dbReference>
<feature type="chain" id="PRO_0000069222" description="Cholecystokinin receptor type A">
    <location>
        <begin position="1"/>
        <end position="430"/>
    </location>
</feature>
<feature type="topological domain" description="Extracellular" evidence="2">
    <location>
        <begin position="1"/>
        <end position="41"/>
    </location>
</feature>
<feature type="transmembrane region" description="Helical; Name=1" evidence="2">
    <location>
        <begin position="42"/>
        <end position="67"/>
    </location>
</feature>
<feature type="topological domain" description="Cytoplasmic" evidence="2">
    <location>
        <begin position="68"/>
        <end position="77"/>
    </location>
</feature>
<feature type="transmembrane region" description="Helical; Name=2" evidence="2">
    <location>
        <begin position="78"/>
        <end position="104"/>
    </location>
</feature>
<feature type="topological domain" description="Extracellular" evidence="2">
    <location>
        <begin position="105"/>
        <end position="115"/>
    </location>
</feature>
<feature type="transmembrane region" description="Helical; Name=3" evidence="2">
    <location>
        <begin position="116"/>
        <end position="137"/>
    </location>
</feature>
<feature type="topological domain" description="Cytoplasmic" evidence="2">
    <location>
        <begin position="138"/>
        <end position="157"/>
    </location>
</feature>
<feature type="transmembrane region" description="Helical; Name=4" evidence="2">
    <location>
        <begin position="158"/>
        <end position="178"/>
    </location>
</feature>
<feature type="topological domain" description="Extracellular" evidence="2">
    <location>
        <begin position="179"/>
        <end position="210"/>
    </location>
</feature>
<feature type="transmembrane region" description="Helical; Name=5" evidence="2">
    <location>
        <begin position="211"/>
        <end position="234"/>
    </location>
</feature>
<feature type="topological domain" description="Cytoplasmic" evidence="2">
    <location>
        <begin position="235"/>
        <end position="315"/>
    </location>
</feature>
<feature type="transmembrane region" description="Helical; Name=6" evidence="2">
    <location>
        <begin position="316"/>
        <end position="336"/>
    </location>
</feature>
<feature type="topological domain" description="Extracellular" evidence="2">
    <location>
        <begin position="337"/>
        <end position="351"/>
    </location>
</feature>
<feature type="transmembrane region" description="Helical; Name=7" evidence="2">
    <location>
        <begin position="352"/>
        <end position="375"/>
    </location>
</feature>
<feature type="topological domain" description="Cytoplasmic" evidence="2">
    <location>
        <begin position="376"/>
        <end position="430"/>
    </location>
</feature>
<feature type="region of interest" description="Disordered" evidence="4">
    <location>
        <begin position="396"/>
        <end position="430"/>
    </location>
</feature>
<feature type="compositionally biased region" description="Polar residues" evidence="4">
    <location>
        <begin position="413"/>
        <end position="430"/>
    </location>
</feature>
<feature type="lipid moiety-binding region" description="S-palmitoyl cysteine" evidence="1">
    <location>
        <position position="389"/>
    </location>
</feature>
<feature type="glycosylation site" description="N-linked (GlcNAc...) asparagine" evidence="2">
    <location>
        <position position="10"/>
    </location>
</feature>
<feature type="glycosylation site" description="N-linked (GlcNAc...) asparagine" evidence="2">
    <location>
        <position position="13"/>
    </location>
</feature>
<feature type="glycosylation site" description="N-linked (GlcNAc...) asparagine" evidence="2">
    <location>
        <position position="24"/>
    </location>
</feature>
<feature type="glycosylation site" description="N-linked (GlcNAc...) asparagine" evidence="2">
    <location>
        <position position="190"/>
    </location>
</feature>
<feature type="disulfide bond" evidence="3">
    <location>
        <begin position="18"/>
        <end position="29"/>
    </location>
</feature>
<feature type="disulfide bond" evidence="3">
    <location>
        <begin position="114"/>
        <end position="196"/>
    </location>
</feature>
<protein>
    <recommendedName>
        <fullName>Cholecystokinin receptor type A</fullName>
        <shortName>CCK-A receptor</shortName>
        <shortName>CCK-AR</shortName>
    </recommendedName>
    <alternativeName>
        <fullName>Cholecystokinin-1 receptor</fullName>
        <shortName>CCK1-R</shortName>
    </alternativeName>
</protein>
<accession>Q63931</accession>
<evidence type="ECO:0000250" key="1"/>
<evidence type="ECO:0000255" key="2"/>
<evidence type="ECO:0000255" key="3">
    <source>
        <dbReference type="PROSITE-ProRule" id="PRU00521"/>
    </source>
</evidence>
<evidence type="ECO:0000256" key="4">
    <source>
        <dbReference type="SAM" id="MobiDB-lite"/>
    </source>
</evidence>
<sequence>MDVVDSLFVNGSNITSACELGFENETLFCLDRPRPSKEWQPAVQILLYSLIFLLSVLGNTLVITVLIRNKRMRTVTNIFLLSLAVSDLMLCLFCMPFNLIPSLLKDFIFGSAVCKTTTYFMGTSVSVSTFNLVAISLERYGAICKPLQSRVWQTKSHALKVIAATWCLSFTIMTPYPIYSNLVPFTKNNNQTGNMCRFLLPNDVMQQTWHTFLLLILFLIPGIVMMVAYGLISLELYQGIKFDAIQKKSAKERKTSTGSSGPMEDSDGCYLQKSRHPRKLELRQLSPSSSGSNRINRIRSSSSTANLMAKKRVIRMLIVIVVLFFLCWMPIFSANAWRAYDTVSAERHLSGTPISFILLLSYTSSCVNPIIYCFMNKRFRLGFMATFPCCPNPGTPGVRGEMGEEEEGRTTGASLSRYSYSHMSTSAPPP</sequence>
<reference key="1">
    <citation type="journal article" date="1993" name="Am. J. Physiol.">
        <title>Guinea pig gallbladder and pancreas possess identical CCK-A receptor subtypes: receptor cloning and expression.</title>
        <authorList>
            <person name="de Weerth A."/>
            <person name="Pisegna J.R."/>
            <person name="Wank S.A."/>
        </authorList>
    </citation>
    <scope>NUCLEOTIDE SEQUENCE [MRNA]</scope>
    <source>
        <tissue>Gall bladder</tissue>
        <tissue>Pancreas</tissue>
    </source>
</reference>